<sequence>MDKKVARIRRATRARHLMREQGATRLVVHRTPRHIYAQVIAPNGSEVLAAASTVEKVIKEQVKYTGNKDAAAVVGKLVAERALAKGIQAVAFDRSGFKYHGRVQVLADAAREAGLQF</sequence>
<feature type="chain" id="PRO_1000052980" description="Large ribosomal subunit protein uL18">
    <location>
        <begin position="1"/>
        <end position="117"/>
    </location>
</feature>
<organism>
    <name type="scientific">Actinobacillus pleuropneumoniae serotype 5b (strain L20)</name>
    <dbReference type="NCBI Taxonomy" id="416269"/>
    <lineage>
        <taxon>Bacteria</taxon>
        <taxon>Pseudomonadati</taxon>
        <taxon>Pseudomonadota</taxon>
        <taxon>Gammaproteobacteria</taxon>
        <taxon>Pasteurellales</taxon>
        <taxon>Pasteurellaceae</taxon>
        <taxon>Actinobacillus</taxon>
    </lineage>
</organism>
<accession>A3N373</accession>
<name>RL18_ACTP2</name>
<proteinExistence type="inferred from homology"/>
<reference key="1">
    <citation type="journal article" date="2008" name="J. Bacteriol.">
        <title>The complete genome sequence of Actinobacillus pleuropneumoniae L20 (serotype 5b).</title>
        <authorList>
            <person name="Foote S.J."/>
            <person name="Bosse J.T."/>
            <person name="Bouevitch A.B."/>
            <person name="Langford P.R."/>
            <person name="Young N.M."/>
            <person name="Nash J.H.E."/>
        </authorList>
    </citation>
    <scope>NUCLEOTIDE SEQUENCE [LARGE SCALE GENOMIC DNA]</scope>
    <source>
        <strain>L20</strain>
    </source>
</reference>
<keyword id="KW-1185">Reference proteome</keyword>
<keyword id="KW-0687">Ribonucleoprotein</keyword>
<keyword id="KW-0689">Ribosomal protein</keyword>
<keyword id="KW-0694">RNA-binding</keyword>
<keyword id="KW-0699">rRNA-binding</keyword>
<evidence type="ECO:0000255" key="1">
    <source>
        <dbReference type="HAMAP-Rule" id="MF_01337"/>
    </source>
</evidence>
<evidence type="ECO:0000305" key="2"/>
<dbReference type="EMBL" id="CP000569">
    <property type="protein sequence ID" value="ABN74859.1"/>
    <property type="molecule type" value="Genomic_DNA"/>
</dbReference>
<dbReference type="RefSeq" id="WP_005599310.1">
    <property type="nucleotide sequence ID" value="NC_009053.1"/>
</dbReference>
<dbReference type="SMR" id="A3N373"/>
<dbReference type="STRING" id="416269.APL_1775"/>
<dbReference type="EnsemblBacteria" id="ABN74859">
    <property type="protein sequence ID" value="ABN74859"/>
    <property type="gene ID" value="APL_1775"/>
</dbReference>
<dbReference type="GeneID" id="48600068"/>
<dbReference type="KEGG" id="apl:APL_1775"/>
<dbReference type="eggNOG" id="COG0256">
    <property type="taxonomic scope" value="Bacteria"/>
</dbReference>
<dbReference type="HOGENOM" id="CLU_098841_0_1_6"/>
<dbReference type="Proteomes" id="UP000001432">
    <property type="component" value="Chromosome"/>
</dbReference>
<dbReference type="GO" id="GO:0022625">
    <property type="term" value="C:cytosolic large ribosomal subunit"/>
    <property type="evidence" value="ECO:0007669"/>
    <property type="project" value="TreeGrafter"/>
</dbReference>
<dbReference type="GO" id="GO:0008097">
    <property type="term" value="F:5S rRNA binding"/>
    <property type="evidence" value="ECO:0007669"/>
    <property type="project" value="TreeGrafter"/>
</dbReference>
<dbReference type="GO" id="GO:0003735">
    <property type="term" value="F:structural constituent of ribosome"/>
    <property type="evidence" value="ECO:0007669"/>
    <property type="project" value="InterPro"/>
</dbReference>
<dbReference type="GO" id="GO:0006412">
    <property type="term" value="P:translation"/>
    <property type="evidence" value="ECO:0007669"/>
    <property type="project" value="UniProtKB-UniRule"/>
</dbReference>
<dbReference type="CDD" id="cd00432">
    <property type="entry name" value="Ribosomal_L18_L5e"/>
    <property type="match status" value="1"/>
</dbReference>
<dbReference type="FunFam" id="3.30.420.100:FF:000001">
    <property type="entry name" value="50S ribosomal protein L18"/>
    <property type="match status" value="1"/>
</dbReference>
<dbReference type="Gene3D" id="3.30.420.100">
    <property type="match status" value="1"/>
</dbReference>
<dbReference type="HAMAP" id="MF_01337_B">
    <property type="entry name" value="Ribosomal_uL18_B"/>
    <property type="match status" value="1"/>
</dbReference>
<dbReference type="InterPro" id="IPR004389">
    <property type="entry name" value="Ribosomal_uL18_bac-type"/>
</dbReference>
<dbReference type="InterPro" id="IPR005484">
    <property type="entry name" value="Ribosomal_uL18_bac/euk"/>
</dbReference>
<dbReference type="NCBIfam" id="TIGR00060">
    <property type="entry name" value="L18_bact"/>
    <property type="match status" value="1"/>
</dbReference>
<dbReference type="PANTHER" id="PTHR12899">
    <property type="entry name" value="39S RIBOSOMAL PROTEIN L18, MITOCHONDRIAL"/>
    <property type="match status" value="1"/>
</dbReference>
<dbReference type="PANTHER" id="PTHR12899:SF3">
    <property type="entry name" value="LARGE RIBOSOMAL SUBUNIT PROTEIN UL18M"/>
    <property type="match status" value="1"/>
</dbReference>
<dbReference type="Pfam" id="PF00861">
    <property type="entry name" value="Ribosomal_L18p"/>
    <property type="match status" value="1"/>
</dbReference>
<dbReference type="SUPFAM" id="SSF53137">
    <property type="entry name" value="Translational machinery components"/>
    <property type="match status" value="1"/>
</dbReference>
<comment type="function">
    <text evidence="1">This is one of the proteins that bind and probably mediate the attachment of the 5S RNA into the large ribosomal subunit, where it forms part of the central protuberance.</text>
</comment>
<comment type="subunit">
    <text evidence="1">Part of the 50S ribosomal subunit; part of the 5S rRNA/L5/L18/L25 subcomplex. Contacts the 5S and 23S rRNAs.</text>
</comment>
<comment type="similarity">
    <text evidence="1">Belongs to the universal ribosomal protein uL18 family.</text>
</comment>
<gene>
    <name evidence="1" type="primary">rplR</name>
    <name type="ordered locus">APL_1775</name>
</gene>
<protein>
    <recommendedName>
        <fullName evidence="1">Large ribosomal subunit protein uL18</fullName>
    </recommendedName>
    <alternativeName>
        <fullName evidence="2">50S ribosomal protein L18</fullName>
    </alternativeName>
</protein>